<feature type="chain" id="PRO_1000124472" description="Transcriptional repressor NrdR">
    <location>
        <begin position="1"/>
        <end position="158"/>
    </location>
</feature>
<feature type="domain" description="ATP-cone" evidence="1">
    <location>
        <begin position="49"/>
        <end position="139"/>
    </location>
</feature>
<feature type="zinc finger region" evidence="1">
    <location>
        <begin position="3"/>
        <end position="34"/>
    </location>
</feature>
<name>NRDR_BRUA1</name>
<keyword id="KW-0067">ATP-binding</keyword>
<keyword id="KW-0238">DNA-binding</keyword>
<keyword id="KW-0479">Metal-binding</keyword>
<keyword id="KW-0547">Nucleotide-binding</keyword>
<keyword id="KW-0678">Repressor</keyword>
<keyword id="KW-0804">Transcription</keyword>
<keyword id="KW-0805">Transcription regulation</keyword>
<keyword id="KW-0862">Zinc</keyword>
<keyword id="KW-0863">Zinc-finger</keyword>
<sequence>MRCPYCQSEDTQVKDSRPAEDGAVIRRRRVCSVCGGRFTTFERVQLRDLMVVKKSGRRVPFDRDKLTRSIEVALRKRDVDSERVERAISGIVRQLESAGEAEVTSDEIGRLAMDALKGIDDIAYIRFASVYRNFSKAVDFHNVIDELTVSETGDNLET</sequence>
<accession>B2S514</accession>
<reference key="1">
    <citation type="journal article" date="2008" name="PLoS ONE">
        <title>Genome sequence of Brucella abortus vaccine strain S19 compared to virulent strains yields candidate virulence genes.</title>
        <authorList>
            <person name="Crasta O.R."/>
            <person name="Folkerts O."/>
            <person name="Fei Z."/>
            <person name="Mane S.P."/>
            <person name="Evans C."/>
            <person name="Martino-Catt S."/>
            <person name="Bricker B."/>
            <person name="Yu G."/>
            <person name="Du L."/>
            <person name="Sobral B.W."/>
        </authorList>
    </citation>
    <scope>NUCLEOTIDE SEQUENCE [LARGE SCALE GENOMIC DNA]</scope>
    <source>
        <strain>S19</strain>
    </source>
</reference>
<protein>
    <recommendedName>
        <fullName evidence="1">Transcriptional repressor NrdR</fullName>
    </recommendedName>
</protein>
<gene>
    <name evidence="1" type="primary">nrdR</name>
    <name type="ordered locus">BAbS19_I07370</name>
</gene>
<comment type="function">
    <text evidence="1">Negatively regulates transcription of bacterial ribonucleotide reductase nrd genes and operons by binding to NrdR-boxes.</text>
</comment>
<comment type="cofactor">
    <cofactor evidence="1">
        <name>Zn(2+)</name>
        <dbReference type="ChEBI" id="CHEBI:29105"/>
    </cofactor>
    <text evidence="1">Binds 1 zinc ion.</text>
</comment>
<comment type="similarity">
    <text evidence="1">Belongs to the NrdR family.</text>
</comment>
<organism>
    <name type="scientific">Brucella abortus (strain S19)</name>
    <dbReference type="NCBI Taxonomy" id="430066"/>
    <lineage>
        <taxon>Bacteria</taxon>
        <taxon>Pseudomonadati</taxon>
        <taxon>Pseudomonadota</taxon>
        <taxon>Alphaproteobacteria</taxon>
        <taxon>Hyphomicrobiales</taxon>
        <taxon>Brucellaceae</taxon>
        <taxon>Brucella/Ochrobactrum group</taxon>
        <taxon>Brucella</taxon>
    </lineage>
</organism>
<dbReference type="EMBL" id="CP000887">
    <property type="protein sequence ID" value="ACD72261.1"/>
    <property type="molecule type" value="Genomic_DNA"/>
</dbReference>
<dbReference type="RefSeq" id="WP_002966765.1">
    <property type="nucleotide sequence ID" value="NC_010742.1"/>
</dbReference>
<dbReference type="SMR" id="B2S514"/>
<dbReference type="GeneID" id="93016844"/>
<dbReference type="KEGG" id="bmc:BAbS19_I07370"/>
<dbReference type="HOGENOM" id="CLU_108412_0_1_5"/>
<dbReference type="Proteomes" id="UP000002565">
    <property type="component" value="Chromosome 1"/>
</dbReference>
<dbReference type="GO" id="GO:0005524">
    <property type="term" value="F:ATP binding"/>
    <property type="evidence" value="ECO:0007669"/>
    <property type="project" value="UniProtKB-KW"/>
</dbReference>
<dbReference type="GO" id="GO:0003677">
    <property type="term" value="F:DNA binding"/>
    <property type="evidence" value="ECO:0007669"/>
    <property type="project" value="UniProtKB-KW"/>
</dbReference>
<dbReference type="GO" id="GO:0008270">
    <property type="term" value="F:zinc ion binding"/>
    <property type="evidence" value="ECO:0007669"/>
    <property type="project" value="UniProtKB-UniRule"/>
</dbReference>
<dbReference type="GO" id="GO:0045892">
    <property type="term" value="P:negative regulation of DNA-templated transcription"/>
    <property type="evidence" value="ECO:0007669"/>
    <property type="project" value="UniProtKB-UniRule"/>
</dbReference>
<dbReference type="HAMAP" id="MF_00440">
    <property type="entry name" value="NrdR"/>
    <property type="match status" value="1"/>
</dbReference>
<dbReference type="InterPro" id="IPR005144">
    <property type="entry name" value="ATP-cone_dom"/>
</dbReference>
<dbReference type="InterPro" id="IPR055173">
    <property type="entry name" value="NrdR-like_N"/>
</dbReference>
<dbReference type="InterPro" id="IPR003796">
    <property type="entry name" value="RNR_NrdR-like"/>
</dbReference>
<dbReference type="NCBIfam" id="TIGR00244">
    <property type="entry name" value="transcriptional regulator NrdR"/>
    <property type="match status" value="1"/>
</dbReference>
<dbReference type="PANTHER" id="PTHR30455">
    <property type="entry name" value="TRANSCRIPTIONAL REPRESSOR NRDR"/>
    <property type="match status" value="1"/>
</dbReference>
<dbReference type="PANTHER" id="PTHR30455:SF2">
    <property type="entry name" value="TRANSCRIPTIONAL REPRESSOR NRDR"/>
    <property type="match status" value="1"/>
</dbReference>
<dbReference type="Pfam" id="PF03477">
    <property type="entry name" value="ATP-cone"/>
    <property type="match status" value="1"/>
</dbReference>
<dbReference type="Pfam" id="PF22811">
    <property type="entry name" value="Zn_ribbon_NrdR"/>
    <property type="match status" value="1"/>
</dbReference>
<dbReference type="PROSITE" id="PS51161">
    <property type="entry name" value="ATP_CONE"/>
    <property type="match status" value="1"/>
</dbReference>
<proteinExistence type="inferred from homology"/>
<evidence type="ECO:0000255" key="1">
    <source>
        <dbReference type="HAMAP-Rule" id="MF_00440"/>
    </source>
</evidence>